<organism>
    <name type="scientific">Cryptococcus neoformans var. grubii serotype A (strain H99 / ATCC 208821 / CBS 10515 / FGSC 9487)</name>
    <name type="common">Filobasidiella neoformans var. grubii</name>
    <dbReference type="NCBI Taxonomy" id="235443"/>
    <lineage>
        <taxon>Eukaryota</taxon>
        <taxon>Fungi</taxon>
        <taxon>Dikarya</taxon>
        <taxon>Basidiomycota</taxon>
        <taxon>Agaricomycotina</taxon>
        <taxon>Tremellomycetes</taxon>
        <taxon>Tremellales</taxon>
        <taxon>Cryptococcaceae</taxon>
        <taxon>Cryptococcus</taxon>
        <taxon>Cryptococcus neoformans species complex</taxon>
    </lineage>
</organism>
<evidence type="ECO:0000250" key="1"/>
<evidence type="ECO:0000255" key="2"/>
<evidence type="ECO:0000255" key="3">
    <source>
        <dbReference type="PROSITE-ProRule" id="PRU01058"/>
    </source>
</evidence>
<evidence type="ECO:0000256" key="4">
    <source>
        <dbReference type="SAM" id="MobiDB-lite"/>
    </source>
</evidence>
<comment type="function">
    <text evidence="1">GTPase that associates with pre-60S ribosomal subunits in the nucleolus and is required for their nuclear export and maturation.</text>
</comment>
<comment type="subcellular location">
    <subcellularLocation>
        <location evidence="1">Nucleus</location>
        <location evidence="1">Nucleolus</location>
    </subcellularLocation>
</comment>
<comment type="miscellaneous">
    <text>The C.neoformans mating-type locus is unique, spans &gt;100 kb, and contains more than 20 genes. MAT-encoded products include homologs of regulators of sexual development in other fungi, pheromone and pheromone receptors, divergent components of a MAP kinase cascade, and other proteins with no obvious function in mating.</text>
</comment>
<comment type="similarity">
    <text evidence="3">Belongs to the TRAFAC class YlqF/YawG GTPase family. NOG2 subfamily.</text>
</comment>
<feature type="chain" id="PRO_0000421127" description="Nucleolar GTP-binding protein 2">
    <location>
        <begin position="1"/>
        <end position="720"/>
    </location>
</feature>
<feature type="domain" description="CP-type G" evidence="3">
    <location>
        <begin position="225"/>
        <end position="386"/>
    </location>
</feature>
<feature type="region of interest" description="Disordered" evidence="4">
    <location>
        <begin position="1"/>
        <end position="27"/>
    </location>
</feature>
<feature type="region of interest" description="Disordered" evidence="4">
    <location>
        <begin position="130"/>
        <end position="162"/>
    </location>
</feature>
<feature type="region of interest" description="Disordered" evidence="4">
    <location>
        <begin position="488"/>
        <end position="527"/>
    </location>
</feature>
<feature type="region of interest" description="Disordered" evidence="4">
    <location>
        <begin position="568"/>
        <end position="720"/>
    </location>
</feature>
<feature type="compositionally biased region" description="Basic and acidic residues" evidence="4">
    <location>
        <begin position="132"/>
        <end position="145"/>
    </location>
</feature>
<feature type="compositionally biased region" description="Basic and acidic residues" evidence="4">
    <location>
        <begin position="507"/>
        <end position="527"/>
    </location>
</feature>
<feature type="compositionally biased region" description="Acidic residues" evidence="4">
    <location>
        <begin position="568"/>
        <end position="615"/>
    </location>
</feature>
<feature type="compositionally biased region" description="Acidic residues" evidence="4">
    <location>
        <begin position="624"/>
        <end position="645"/>
    </location>
</feature>
<feature type="compositionally biased region" description="Polar residues" evidence="4">
    <location>
        <begin position="674"/>
        <end position="687"/>
    </location>
</feature>
<feature type="compositionally biased region" description="Basic residues" evidence="4">
    <location>
        <begin position="688"/>
        <end position="704"/>
    </location>
</feature>
<feature type="binding site" evidence="2">
    <location>
        <begin position="335"/>
        <end position="342"/>
    </location>
    <ligand>
        <name>GTP</name>
        <dbReference type="ChEBI" id="CHEBI:37565"/>
    </ligand>
</feature>
<feature type="binding site" evidence="2">
    <location>
        <begin position="379"/>
        <end position="383"/>
    </location>
    <ligand>
        <name>GTP</name>
        <dbReference type="ChEBI" id="CHEBI:37565"/>
    </ligand>
</feature>
<name>NOG2_CRYNH</name>
<accession>J9VQ03</accession>
<accession>Q8J0Y9</accession>
<accession>Q8J109</accession>
<protein>
    <recommendedName>
        <fullName>Nucleolar GTP-binding protein 2</fullName>
    </recommendedName>
</protein>
<proteinExistence type="inferred from homology"/>
<gene>
    <name type="primary">NOG2</name>
    <name type="ORF">CNAG_07413</name>
</gene>
<dbReference type="EMBL" id="AF542529">
    <property type="protein sequence ID" value="AAN75166.2"/>
    <property type="molecule type" value="Genomic_DNA"/>
</dbReference>
<dbReference type="EMBL" id="CP003824">
    <property type="protein sequence ID" value="AFR94694.2"/>
    <property type="molecule type" value="Genomic_DNA"/>
</dbReference>
<dbReference type="RefSeq" id="XP_012048928.1">
    <property type="nucleotide sequence ID" value="XM_012193538.1"/>
</dbReference>
<dbReference type="SMR" id="J9VQ03"/>
<dbReference type="GeneID" id="23890260"/>
<dbReference type="KEGG" id="cng:CNAG_07413"/>
<dbReference type="VEuPathDB" id="FungiDB:CNAG_07413"/>
<dbReference type="HOGENOM" id="CLU_011106_4_1_1"/>
<dbReference type="OrthoDB" id="7220at5206"/>
<dbReference type="Proteomes" id="UP000010091">
    <property type="component" value="Chromosome 5"/>
</dbReference>
<dbReference type="GO" id="GO:0005730">
    <property type="term" value="C:nucleolus"/>
    <property type="evidence" value="ECO:0007669"/>
    <property type="project" value="UniProtKB-SubCell"/>
</dbReference>
<dbReference type="GO" id="GO:0005525">
    <property type="term" value="F:GTP binding"/>
    <property type="evidence" value="ECO:0007669"/>
    <property type="project" value="UniProtKB-KW"/>
</dbReference>
<dbReference type="GO" id="GO:0042254">
    <property type="term" value="P:ribosome biogenesis"/>
    <property type="evidence" value="ECO:0007669"/>
    <property type="project" value="UniProtKB-KW"/>
</dbReference>
<dbReference type="CDD" id="cd01858">
    <property type="entry name" value="NGP_1"/>
    <property type="match status" value="1"/>
</dbReference>
<dbReference type="FunFam" id="3.40.50.300:FF:000559">
    <property type="entry name" value="Nuclear/nucleolar GTPase 2"/>
    <property type="match status" value="1"/>
</dbReference>
<dbReference type="FunFam" id="1.10.1580.10:FF:000001">
    <property type="entry name" value="Nucleolar GTP-binding protein 2"/>
    <property type="match status" value="1"/>
</dbReference>
<dbReference type="Gene3D" id="1.10.1580.10">
    <property type="match status" value="1"/>
</dbReference>
<dbReference type="Gene3D" id="3.40.50.300">
    <property type="entry name" value="P-loop containing nucleotide triphosphate hydrolases"/>
    <property type="match status" value="1"/>
</dbReference>
<dbReference type="InterPro" id="IPR030378">
    <property type="entry name" value="G_CP_dom"/>
</dbReference>
<dbReference type="InterPro" id="IPR024929">
    <property type="entry name" value="GNL2_CP_dom"/>
</dbReference>
<dbReference type="InterPro" id="IPR006073">
    <property type="entry name" value="GTP-bd"/>
</dbReference>
<dbReference type="InterPro" id="IPR023179">
    <property type="entry name" value="GTP-bd_ortho_bundle_sf"/>
</dbReference>
<dbReference type="InterPro" id="IPR012971">
    <property type="entry name" value="NOG2_N_dom"/>
</dbReference>
<dbReference type="InterPro" id="IPR027417">
    <property type="entry name" value="P-loop_NTPase"/>
</dbReference>
<dbReference type="InterPro" id="IPR050755">
    <property type="entry name" value="TRAFAC_YlqF/YawG_RiboMat"/>
</dbReference>
<dbReference type="PANTHER" id="PTHR11089">
    <property type="entry name" value="GTP-BINDING PROTEIN-RELATED"/>
    <property type="match status" value="1"/>
</dbReference>
<dbReference type="PANTHER" id="PTHR11089:SF9">
    <property type="entry name" value="NUCLEOLAR GTP-BINDING PROTEIN 2"/>
    <property type="match status" value="1"/>
</dbReference>
<dbReference type="Pfam" id="PF01926">
    <property type="entry name" value="MMR_HSR1"/>
    <property type="match status" value="1"/>
</dbReference>
<dbReference type="Pfam" id="PF08153">
    <property type="entry name" value="NGP1NT"/>
    <property type="match status" value="1"/>
</dbReference>
<dbReference type="PRINTS" id="PR00326">
    <property type="entry name" value="GTP1OBG"/>
</dbReference>
<dbReference type="SUPFAM" id="SSF52540">
    <property type="entry name" value="P-loop containing nucleoside triphosphate hydrolases"/>
    <property type="match status" value="1"/>
</dbReference>
<dbReference type="PROSITE" id="PS51721">
    <property type="entry name" value="G_CP"/>
    <property type="match status" value="1"/>
</dbReference>
<keyword id="KW-0342">GTP-binding</keyword>
<keyword id="KW-0547">Nucleotide-binding</keyword>
<keyword id="KW-0539">Nucleus</keyword>
<keyword id="KW-0690">Ribosome biogenesis</keyword>
<sequence>MGKGKNHDRKANPGFGKVKSKSGTSTGEFTLKRVKGENFYRDAKSASRVKMLNGGKAVRDRDGKIVEAAAFQKGEKEAEPGRVKPDRRWFGNTRVISQSALDHFRTALKEQKADPYSVLLKRNKLPMGLLQDDTKDGGRRPHIVETEPFGNTFGPKAQRKRPRLDIGSIEELGESSAASAAAAAAETATAESQGNGTADLADIYHPTTSTAREPIYAKGTSRRIWGELYKVLDSSDVVIHVLDARDPLGTRCKPVVEYLRKEKAHKHLVYVLNKVDLVPTWVTARWVKHLSLSAPTIAFHASINNSFGKGSLIQLLRQFSVLHSDKKQISVGFIGYPNTGKSSIINTLKKKKVCTVAPIPGETKVWQYITLMRRIYLIDCPGIVPVSAKDSDTDTVLKGVVRVENLATPAEHIPALLERVRPEYLERTYGLEHVEGGWHGEEGATFVLTAIAKKSGKLLKGGEPDQEAAAKMVLNDWIRGKVPFFVAPPTKPESGADAHVSSATTEKVQEQEQKELAEEKETKEMLEEQERSLGKVLGIKRVKGVEQPISKIVTMTKFLGDDARRYVEEEEVDVDDVDKEMAEEDEDEDEDDDDDVEESGEDQEEEELAWDDVFPEEAAGVDAADGEEVEEDDEEEEGDEDDEDVPSAKQLGKRKAIDSDEEEQTAIKAKRMTTNKQKASNFYTHANVKNRNRDRKVPKNPGKRSRGDDEPTGKKAKKRR</sequence>
<reference key="1">
    <citation type="journal article" date="2002" name="Eukaryot. Cell">
        <title>Mating-type locus of Cryptococcus neoformans: a step in the evolution of sex chromosomes.</title>
        <authorList>
            <person name="Lengeler K.B."/>
            <person name="Fox D.S."/>
            <person name="Fraser J.A."/>
            <person name="Allen A."/>
            <person name="Forrester K."/>
            <person name="Dietrich F.S."/>
            <person name="Heitman J."/>
        </authorList>
    </citation>
    <scope>NUCLEOTIDE SEQUENCE [GENOMIC DNA]</scope>
    <source>
        <strain>H99 / ATCC 208821 / CBS 10515 / FGSC 9487</strain>
    </source>
</reference>
<reference key="2">
    <citation type="submission" date="2004-12" db="EMBL/GenBank/DDBJ databases">
        <authorList>
            <person name="Dietrich F.S."/>
        </authorList>
    </citation>
    <scope>SEQUENCE REVISION</scope>
</reference>
<reference key="3">
    <citation type="journal article" date="2014" name="PLoS Genet.">
        <title>Analysis of the genome and transcriptome of Cryptococcus neoformans var. grubii reveals complex RNA expression and microevolution leading to virulence attenuation.</title>
        <authorList>
            <person name="Janbon G."/>
            <person name="Ormerod K.L."/>
            <person name="Paulet D."/>
            <person name="Byrnes E.J. III"/>
            <person name="Yadav V."/>
            <person name="Chatterjee G."/>
            <person name="Mullapudi N."/>
            <person name="Hon C.-C."/>
            <person name="Billmyre R.B."/>
            <person name="Brunel F."/>
            <person name="Bahn Y.-S."/>
            <person name="Chen W."/>
            <person name="Chen Y."/>
            <person name="Chow E.W.L."/>
            <person name="Coppee J.-Y."/>
            <person name="Floyd-Averette A."/>
            <person name="Gaillardin C."/>
            <person name="Gerik K.J."/>
            <person name="Goldberg J."/>
            <person name="Gonzalez-Hilarion S."/>
            <person name="Gujja S."/>
            <person name="Hamlin J.L."/>
            <person name="Hsueh Y.-P."/>
            <person name="Ianiri G."/>
            <person name="Jones S."/>
            <person name="Kodira C.D."/>
            <person name="Kozubowski L."/>
            <person name="Lam W."/>
            <person name="Marra M."/>
            <person name="Mesner L.D."/>
            <person name="Mieczkowski P.A."/>
            <person name="Moyrand F."/>
            <person name="Nielsen K."/>
            <person name="Proux C."/>
            <person name="Rossignol T."/>
            <person name="Schein J.E."/>
            <person name="Sun S."/>
            <person name="Wollschlaeger C."/>
            <person name="Wood I.A."/>
            <person name="Zeng Q."/>
            <person name="Neuveglise C."/>
            <person name="Newlon C.S."/>
            <person name="Perfect J.R."/>
            <person name="Lodge J.K."/>
            <person name="Idnurm A."/>
            <person name="Stajich J.E."/>
            <person name="Kronstad J.W."/>
            <person name="Sanyal K."/>
            <person name="Heitman J."/>
            <person name="Fraser J.A."/>
            <person name="Cuomo C.A."/>
            <person name="Dietrich F.S."/>
        </authorList>
    </citation>
    <scope>NUCLEOTIDE SEQUENCE [LARGE SCALE GENOMIC DNA]</scope>
    <source>
        <strain>H99 / ATCC 208821 / CBS 10515 / FGSC 9487</strain>
    </source>
</reference>